<proteinExistence type="inferred from homology"/>
<sequence>MIIDLNTNNVLGKKFSTSTKKENIKQIESSSFLTFKQPTEWQERWYLSSNAKDIGTLYLMFALFSGLLGTAFSVLIRLELSGPGVQYIADNQLYNSIITAHAIMMIFFMVMPALIGGFGNFLLPLLVGGPDMAFPRLNNISFWLLVPSLLLFVFSATIENGAGTGWTLYPPLSGIQSHSGPSVDLAIFGLHLSGISSMLGAMNFITTILNMRSPGIRLHKLALFGWAVIITAVLLLLSLPVLAGGITMVLTDRNFNTSFFEVAGGGDPILFQHLFWFFGHPEVYILIIPGFGIISTVIAAGSGKNVFGYLGMVYAMMSIGVLGFLVWSHHMYTVGLDVDTRAYFTAATLIIAVPTGIKIFSWLATCYGGSLHLTPPMLFALGFVVLFTIGGLSGVVLANASLDVAFHDTYYVVAHFHYVLSMGAVFALFSGWYLWIPKLLGLSYDQFAAKVHFWILFIGVNLTFFPQHFLGLQLMPRRISDYPDAFYGWNLLSSIGSIISVVATWYFLTIIYKQLTEGKAVSRYPWLTPQLFSDTFQVLFTRNNSSLEWCLTSPPKPHAFASLPLQS</sequence>
<dbReference type="EC" id="7.1.1.9"/>
<dbReference type="EMBL" id="X00790">
    <property type="protein sequence ID" value="CAB38220.1"/>
    <property type="molecule type" value="Genomic_DNA"/>
</dbReference>
<dbReference type="PIR" id="A22735">
    <property type="entry name" value="ODAS1"/>
</dbReference>
<dbReference type="SMR" id="P00402"/>
<dbReference type="UniPathway" id="UPA00705"/>
<dbReference type="GO" id="GO:0005743">
    <property type="term" value="C:mitochondrial inner membrane"/>
    <property type="evidence" value="ECO:0007669"/>
    <property type="project" value="UniProtKB-SubCell"/>
</dbReference>
<dbReference type="GO" id="GO:0045277">
    <property type="term" value="C:respiratory chain complex IV"/>
    <property type="evidence" value="ECO:0007669"/>
    <property type="project" value="InterPro"/>
</dbReference>
<dbReference type="GO" id="GO:0004129">
    <property type="term" value="F:cytochrome-c oxidase activity"/>
    <property type="evidence" value="ECO:0007669"/>
    <property type="project" value="UniProtKB-EC"/>
</dbReference>
<dbReference type="GO" id="GO:0020037">
    <property type="term" value="F:heme binding"/>
    <property type="evidence" value="ECO:0007669"/>
    <property type="project" value="InterPro"/>
</dbReference>
<dbReference type="GO" id="GO:0046872">
    <property type="term" value="F:metal ion binding"/>
    <property type="evidence" value="ECO:0007669"/>
    <property type="project" value="UniProtKB-KW"/>
</dbReference>
<dbReference type="GO" id="GO:0015990">
    <property type="term" value="P:electron transport coupled proton transport"/>
    <property type="evidence" value="ECO:0007669"/>
    <property type="project" value="TreeGrafter"/>
</dbReference>
<dbReference type="GO" id="GO:0006123">
    <property type="term" value="P:mitochondrial electron transport, cytochrome c to oxygen"/>
    <property type="evidence" value="ECO:0007669"/>
    <property type="project" value="TreeGrafter"/>
</dbReference>
<dbReference type="CDD" id="cd01663">
    <property type="entry name" value="Cyt_c_Oxidase_I"/>
    <property type="match status" value="1"/>
</dbReference>
<dbReference type="FunFam" id="1.20.210.10:FF:000001">
    <property type="entry name" value="Cytochrome c oxidase subunit 1"/>
    <property type="match status" value="1"/>
</dbReference>
<dbReference type="Gene3D" id="1.20.210.10">
    <property type="entry name" value="Cytochrome c oxidase-like, subunit I domain"/>
    <property type="match status" value="1"/>
</dbReference>
<dbReference type="InterPro" id="IPR023616">
    <property type="entry name" value="Cyt_c_oxase-like_su1_dom"/>
</dbReference>
<dbReference type="InterPro" id="IPR036927">
    <property type="entry name" value="Cyt_c_oxase-like_su1_sf"/>
</dbReference>
<dbReference type="InterPro" id="IPR000883">
    <property type="entry name" value="Cyt_C_Oxase_1"/>
</dbReference>
<dbReference type="InterPro" id="IPR023615">
    <property type="entry name" value="Cyt_c_Oxase_su1_BS"/>
</dbReference>
<dbReference type="InterPro" id="IPR033944">
    <property type="entry name" value="Cyt_c_oxase_su1_dom"/>
</dbReference>
<dbReference type="PANTHER" id="PTHR10422">
    <property type="entry name" value="CYTOCHROME C OXIDASE SUBUNIT 1"/>
    <property type="match status" value="1"/>
</dbReference>
<dbReference type="PANTHER" id="PTHR10422:SF18">
    <property type="entry name" value="CYTOCHROME C OXIDASE SUBUNIT 1"/>
    <property type="match status" value="1"/>
</dbReference>
<dbReference type="Pfam" id="PF00115">
    <property type="entry name" value="COX1"/>
    <property type="match status" value="1"/>
</dbReference>
<dbReference type="PRINTS" id="PR01165">
    <property type="entry name" value="CYCOXIDASEI"/>
</dbReference>
<dbReference type="SUPFAM" id="SSF81442">
    <property type="entry name" value="Cytochrome c oxidase subunit I-like"/>
    <property type="match status" value="1"/>
</dbReference>
<dbReference type="PROSITE" id="PS50855">
    <property type="entry name" value="COX1"/>
    <property type="match status" value="1"/>
</dbReference>
<dbReference type="PROSITE" id="PS00077">
    <property type="entry name" value="COX1_CUB"/>
    <property type="match status" value="1"/>
</dbReference>
<geneLocation type="mitochondrion"/>
<accession>P00402</accession>
<evidence type="ECO:0000250" key="1">
    <source>
        <dbReference type="UniProtKB" id="P00396"/>
    </source>
</evidence>
<evidence type="ECO:0000250" key="2">
    <source>
        <dbReference type="UniProtKB" id="P00401"/>
    </source>
</evidence>
<evidence type="ECO:0000255" key="3"/>
<evidence type="ECO:0000305" key="4"/>
<comment type="function">
    <text evidence="2">Component of the cytochrome c oxidase, the last enzyme in the mitochondrial electron transport chain which drives oxidative phosphorylation. The respiratory chain contains 3 multisubunit complexes succinate dehydrogenase (complex II, CII), ubiquinol-cytochrome c oxidoreductase (cytochrome b-c1 complex, complex III, CIII) and cytochrome c oxidase (complex IV, CIV), that cooperate to transfer electrons derived from NADH and succinate to molecular oxygen, creating an electrochemical gradient over the inner membrane that drives transmembrane transport and the ATP synthase. Cytochrome c oxidase is the component of the respiratory chain that catalyzes the reduction of oxygen to water. Electrons originating from reduced cytochrome c in the intermembrane space (IMS) are transferred via the dinuclear copper A center (CU(A)) of subunit 2 and heme A of subunit 1 to the active site in subunit 1, a binuclear center (BNC) formed by heme A3 and copper B (CU(B)). The BNC reduces molecular oxygen to 2 water molecules using 4 electrons from cytochrome c in the IMS and 4 protons from the mitochondrial matrix.</text>
</comment>
<comment type="catalytic activity">
    <reaction evidence="2">
        <text>4 Fe(II)-[cytochrome c] + O2 + 8 H(+)(in) = 4 Fe(III)-[cytochrome c] + 2 H2O + 4 H(+)(out)</text>
        <dbReference type="Rhea" id="RHEA:11436"/>
        <dbReference type="Rhea" id="RHEA-COMP:10350"/>
        <dbReference type="Rhea" id="RHEA-COMP:14399"/>
        <dbReference type="ChEBI" id="CHEBI:15377"/>
        <dbReference type="ChEBI" id="CHEBI:15378"/>
        <dbReference type="ChEBI" id="CHEBI:15379"/>
        <dbReference type="ChEBI" id="CHEBI:29033"/>
        <dbReference type="ChEBI" id="CHEBI:29034"/>
        <dbReference type="EC" id="7.1.1.9"/>
    </reaction>
    <physiologicalReaction direction="left-to-right" evidence="2">
        <dbReference type="Rhea" id="RHEA:11437"/>
    </physiologicalReaction>
</comment>
<comment type="cofactor">
    <cofactor evidence="2">
        <name>heme</name>
        <dbReference type="ChEBI" id="CHEBI:30413"/>
    </cofactor>
    <text evidence="2">Binds 2 heme A groups non-covalently per subunit.</text>
</comment>
<comment type="cofactor">
    <cofactor evidence="2">
        <name>Cu cation</name>
        <dbReference type="ChEBI" id="CHEBI:23378"/>
    </cofactor>
    <text evidence="2">Binds a copper B center.</text>
</comment>
<comment type="pathway">
    <text evidence="2">Energy metabolism; oxidative phosphorylation.</text>
</comment>
<comment type="subunit">
    <text evidence="2">Component of the cytochrome c oxidase (complex IV, CIV), a multisubunit enzyme composed of a catalytic core of 3 subunits and several supernumerary subunits. The complex exists as a monomer or a dimer and forms supercomplexes (SCs) in the inner mitochondrial membrane with ubiquinol-cytochrome c oxidoreductase (cytochrome b-c1 complex, complex III, CIII).</text>
</comment>
<comment type="subcellular location">
    <subcellularLocation>
        <location evidence="2">Mitochondrion inner membrane</location>
        <topology evidence="2">Multi-pass membrane protein</topology>
    </subcellularLocation>
</comment>
<comment type="similarity">
    <text evidence="4">Belongs to the heme-copper respiratory oxidase family.</text>
</comment>
<name>COX1_EMEND</name>
<keyword id="KW-0106">Calcium</keyword>
<keyword id="KW-0186">Copper</keyword>
<keyword id="KW-0249">Electron transport</keyword>
<keyword id="KW-0349">Heme</keyword>
<keyword id="KW-0408">Iron</keyword>
<keyword id="KW-0460">Magnesium</keyword>
<keyword id="KW-0472">Membrane</keyword>
<keyword id="KW-0479">Metal-binding</keyword>
<keyword id="KW-0496">Mitochondrion</keyword>
<keyword id="KW-0999">Mitochondrion inner membrane</keyword>
<keyword id="KW-0679">Respiratory chain</keyword>
<keyword id="KW-1278">Translocase</keyword>
<keyword id="KW-0812">Transmembrane</keyword>
<keyword id="KW-1133">Transmembrane helix</keyword>
<keyword id="KW-0813">Transport</keyword>
<organism>
    <name type="scientific">Emericella nidulans</name>
    <name type="common">Aspergillus nidulans</name>
    <dbReference type="NCBI Taxonomy" id="162425"/>
    <lineage>
        <taxon>Eukaryota</taxon>
        <taxon>Fungi</taxon>
        <taxon>Dikarya</taxon>
        <taxon>Ascomycota</taxon>
        <taxon>Pezizomycotina</taxon>
        <taxon>Eurotiomycetes</taxon>
        <taxon>Eurotiomycetidae</taxon>
        <taxon>Eurotiales</taxon>
        <taxon>Aspergillaceae</taxon>
        <taxon>Aspergillus</taxon>
        <taxon>Aspergillus subgen. Nidulantes</taxon>
    </lineage>
</organism>
<gene>
    <name type="primary">cox1</name>
    <name type="synonym">oxiA</name>
</gene>
<protein>
    <recommendedName>
        <fullName>Cytochrome c oxidase subunit 1</fullName>
        <ecNumber>7.1.1.9</ecNumber>
    </recommendedName>
    <alternativeName>
        <fullName>Cytochrome c oxidase polypeptide I</fullName>
    </alternativeName>
</protein>
<reference key="1">
    <citation type="journal article" date="1984" name="EMBO J.">
        <title>Three variant introns of the same general class in the mitochondrial gene for cytochrome oxidase subunit 1 in Aspergillus nidulans.</title>
        <authorList>
            <person name="Waring R.B."/>
            <person name="Brown T.A."/>
            <person name="Ray J.A."/>
            <person name="Scazzocchio C."/>
            <person name="Davies R.W."/>
        </authorList>
    </citation>
    <scope>NUCLEOTIDE SEQUENCE [GENOMIC DNA]</scope>
    <source>
        <strain>yA2 pyroA4 cnxC3</strain>
    </source>
</reference>
<reference key="2">
    <citation type="journal article" date="1982" name="Nucleic Acids Res.">
        <title>Nucleotide sequence of Aspergillus nidulans mitochondrial genes coding for ATPase subunit 6, cytochrome oxidase subunit 3, seven unidentified proteins, four tRNAs and L-rRNA.</title>
        <authorList>
            <person name="Netzker R."/>
            <person name="Koechel H.G."/>
            <person name="Basak N."/>
            <person name="Kuentzel H."/>
        </authorList>
    </citation>
    <scope>NUCLEOTIDE SEQUENCE [GENOMIC DNA] OF 44-133</scope>
    <source>
        <strain>pabaA1 biA1</strain>
    </source>
</reference>
<feature type="chain" id="PRO_0000183331" description="Cytochrome c oxidase subunit 1">
    <location>
        <begin position="1"/>
        <end position="567"/>
    </location>
</feature>
<feature type="transmembrane region" description="Helical" evidence="3">
    <location>
        <begin position="56"/>
        <end position="76"/>
    </location>
</feature>
<feature type="transmembrane region" description="Helical" evidence="3">
    <location>
        <begin position="103"/>
        <end position="123"/>
    </location>
</feature>
<feature type="transmembrane region" description="Helical" evidence="3">
    <location>
        <begin position="139"/>
        <end position="159"/>
    </location>
</feature>
<feature type="transmembrane region" description="Helical" evidence="3">
    <location>
        <begin position="185"/>
        <end position="205"/>
    </location>
</feature>
<feature type="transmembrane region" description="Helical" evidence="3">
    <location>
        <begin position="221"/>
        <end position="241"/>
    </location>
</feature>
<feature type="transmembrane region" description="Helical" evidence="3">
    <location>
        <begin position="274"/>
        <end position="294"/>
    </location>
</feature>
<feature type="transmembrane region" description="Helical" evidence="3">
    <location>
        <begin position="306"/>
        <end position="326"/>
    </location>
</feature>
<feature type="transmembrane region" description="Helical" evidence="3">
    <location>
        <begin position="344"/>
        <end position="364"/>
    </location>
</feature>
<feature type="transmembrane region" description="Helical" evidence="3">
    <location>
        <begin position="377"/>
        <end position="397"/>
    </location>
</feature>
<feature type="transmembrane region" description="Helical" evidence="3">
    <location>
        <begin position="416"/>
        <end position="436"/>
    </location>
</feature>
<feature type="transmembrane region" description="Helical" evidence="3">
    <location>
        <begin position="451"/>
        <end position="471"/>
    </location>
</feature>
<feature type="transmembrane region" description="Helical" evidence="3">
    <location>
        <begin position="491"/>
        <end position="511"/>
    </location>
</feature>
<feature type="binding site" evidence="2">
    <location>
        <position position="79"/>
    </location>
    <ligand>
        <name>Ca(2+)</name>
        <dbReference type="ChEBI" id="CHEBI:29108"/>
    </ligand>
</feature>
<feature type="binding site" evidence="2">
    <location>
        <position position="84"/>
    </location>
    <ligand>
        <name>Ca(2+)</name>
        <dbReference type="ChEBI" id="CHEBI:29108"/>
    </ligand>
</feature>
<feature type="binding site" description="axial binding residue" evidence="2">
    <location>
        <position position="101"/>
    </location>
    <ligand>
        <name>Fe(II)-heme a</name>
        <dbReference type="ChEBI" id="CHEBI:61715"/>
        <note>low-spin</note>
    </ligand>
    <ligandPart>
        <name>Fe</name>
        <dbReference type="ChEBI" id="CHEBI:18248"/>
    </ligandPart>
</feature>
<feature type="binding site" evidence="2">
    <location>
        <position position="280"/>
    </location>
    <ligand>
        <name>Cu cation</name>
        <dbReference type="ChEBI" id="CHEBI:23378"/>
        <label>B</label>
    </ligand>
</feature>
<feature type="binding site" evidence="1">
    <location>
        <position position="284"/>
    </location>
    <ligand>
        <name>O2</name>
        <dbReference type="ChEBI" id="CHEBI:15379"/>
    </ligand>
</feature>
<feature type="binding site" evidence="2">
    <location>
        <position position="329"/>
    </location>
    <ligand>
        <name>Cu cation</name>
        <dbReference type="ChEBI" id="CHEBI:23378"/>
        <label>B</label>
    </ligand>
</feature>
<feature type="binding site" evidence="2">
    <location>
        <position position="330"/>
    </location>
    <ligand>
        <name>Cu cation</name>
        <dbReference type="ChEBI" id="CHEBI:23378"/>
        <label>B</label>
    </ligand>
</feature>
<feature type="binding site" evidence="2">
    <location>
        <position position="407"/>
    </location>
    <ligand>
        <name>Mg(2+)</name>
        <dbReference type="ChEBI" id="CHEBI:18420"/>
        <note>ligand shared with subunit 2</note>
    </ligand>
</feature>
<feature type="binding site" evidence="2">
    <location>
        <position position="408"/>
    </location>
    <ligand>
        <name>Mg(2+)</name>
        <dbReference type="ChEBI" id="CHEBI:18420"/>
        <note>ligand shared with subunit 2</note>
    </ligand>
</feature>
<feature type="binding site" description="axial binding residue" evidence="2">
    <location>
        <position position="415"/>
    </location>
    <ligand>
        <name>heme a3</name>
        <dbReference type="ChEBI" id="CHEBI:83282"/>
        <note>high-spin</note>
    </ligand>
    <ligandPart>
        <name>Fe</name>
        <dbReference type="ChEBI" id="CHEBI:18248"/>
    </ligandPart>
</feature>
<feature type="binding site" description="axial binding residue" evidence="2">
    <location>
        <position position="417"/>
    </location>
    <ligand>
        <name>Fe(II)-heme a</name>
        <dbReference type="ChEBI" id="CHEBI:61715"/>
        <note>low-spin</note>
    </ligand>
    <ligandPart>
        <name>Fe</name>
        <dbReference type="ChEBI" id="CHEBI:18248"/>
    </ligandPart>
</feature>
<feature type="cross-link" description="1'-histidyl-3'-tyrosine (His-Tyr)" evidence="2">
    <location>
        <begin position="280"/>
        <end position="284"/>
    </location>
</feature>